<evidence type="ECO:0000250" key="1"/>
<evidence type="ECO:0000250" key="2">
    <source>
        <dbReference type="UniProtKB" id="O88932"/>
    </source>
</evidence>
<evidence type="ECO:0000250" key="3">
    <source>
        <dbReference type="UniProtKB" id="P49655"/>
    </source>
</evidence>
<evidence type="ECO:0000250" key="4">
    <source>
        <dbReference type="UniProtKB" id="Q99712"/>
    </source>
</evidence>
<evidence type="ECO:0000255" key="5"/>
<evidence type="ECO:0000269" key="6">
    <source>
    </source>
</evidence>
<evidence type="ECO:0000303" key="7">
    <source>
    </source>
</evidence>
<evidence type="ECO:0000305" key="8"/>
<protein>
    <recommendedName>
        <fullName>ATP-sensitive inward rectifier potassium channel 15</fullName>
    </recommendedName>
    <alternativeName>
        <fullName evidence="7">Inward rectifier K(+) channel Kir4.2</fullName>
    </alternativeName>
    <alternativeName>
        <fullName>Potassium channel, inwardly rectifying subfamily J member 15</fullName>
    </alternativeName>
</protein>
<proteinExistence type="evidence at transcript level"/>
<accession>Q91ZF1</accession>
<dbReference type="EMBL" id="AY028455">
    <property type="protein sequence ID" value="AAK20928.1"/>
    <property type="molecule type" value="mRNA"/>
</dbReference>
<dbReference type="RefSeq" id="NP_001420794.1">
    <molecule id="Q91ZF1-1"/>
    <property type="nucleotide sequence ID" value="NM_001433865.1"/>
</dbReference>
<dbReference type="RefSeq" id="NP_001420795.1">
    <molecule id="Q91ZF1-1"/>
    <property type="nucleotide sequence ID" value="NM_001433866.1"/>
</dbReference>
<dbReference type="RefSeq" id="NP_001420796.1">
    <molecule id="Q91ZF1-1"/>
    <property type="nucleotide sequence ID" value="NM_001433867.1"/>
</dbReference>
<dbReference type="RefSeq" id="NP_001420797.1">
    <molecule id="Q91ZF1-1"/>
    <property type="nucleotide sequence ID" value="NM_001433868.1"/>
</dbReference>
<dbReference type="RefSeq" id="NP_001420798.1">
    <molecule id="Q91ZF1-2"/>
    <property type="nucleotide sequence ID" value="NM_001433869.1"/>
</dbReference>
<dbReference type="RefSeq" id="NP_001420799.1">
    <molecule id="Q91ZF1-2"/>
    <property type="nucleotide sequence ID" value="NM_001433870.1"/>
</dbReference>
<dbReference type="RefSeq" id="NP_001420800.1">
    <molecule id="Q91ZF1-2"/>
    <property type="nucleotide sequence ID" value="NM_001433871.1"/>
</dbReference>
<dbReference type="RefSeq" id="NP_579855.1">
    <molecule id="Q91ZF1-1"/>
    <property type="nucleotide sequence ID" value="NM_133321.3"/>
</dbReference>
<dbReference type="RefSeq" id="XP_006248190.1">
    <molecule id="Q91ZF1-1"/>
    <property type="nucleotide sequence ID" value="XM_006248128.5"/>
</dbReference>
<dbReference type="RefSeq" id="XP_006248191.1">
    <property type="nucleotide sequence ID" value="XM_006248129.3"/>
</dbReference>
<dbReference type="RefSeq" id="XP_006248193.1">
    <property type="nucleotide sequence ID" value="XM_006248131.3"/>
</dbReference>
<dbReference type="RefSeq" id="XP_006248194.1">
    <molecule id="Q91ZF1-1"/>
    <property type="nucleotide sequence ID" value="XM_006248132.5"/>
</dbReference>
<dbReference type="RefSeq" id="XP_006248195.1">
    <property type="nucleotide sequence ID" value="XM_006248133.3"/>
</dbReference>
<dbReference type="RefSeq" id="XP_006248197.1">
    <property type="nucleotide sequence ID" value="XM_006248135.2"/>
</dbReference>
<dbReference type="RefSeq" id="XP_006248201.1">
    <property type="nucleotide sequence ID" value="XM_006248139.3"/>
</dbReference>
<dbReference type="RefSeq" id="XP_006248203.1">
    <molecule id="Q91ZF1-2"/>
    <property type="nucleotide sequence ID" value="XM_006248141.5"/>
</dbReference>
<dbReference type="RefSeq" id="XP_008766772.1">
    <molecule id="Q91ZF1-1"/>
    <property type="nucleotide sequence ID" value="XM_008768550.4"/>
</dbReference>
<dbReference type="RefSeq" id="XP_008766773.1">
    <property type="nucleotide sequence ID" value="XM_008768551.2"/>
</dbReference>
<dbReference type="RefSeq" id="XP_008766774.1">
    <molecule id="Q91ZF1-1"/>
    <property type="nucleotide sequence ID" value="XM_008768552.4"/>
</dbReference>
<dbReference type="RefSeq" id="XP_008766775.1">
    <property type="nucleotide sequence ID" value="XM_008768553.2"/>
</dbReference>
<dbReference type="RefSeq" id="XP_017453350.1">
    <property type="nucleotide sequence ID" value="XM_017597861.1"/>
</dbReference>
<dbReference type="RefSeq" id="XP_017453351.1">
    <property type="nucleotide sequence ID" value="XM_017597862.1"/>
</dbReference>
<dbReference type="RefSeq" id="XP_017453352.1">
    <property type="nucleotide sequence ID" value="XM_017597863.1"/>
</dbReference>
<dbReference type="RefSeq" id="XP_038943852.1">
    <molecule id="Q91ZF1-2"/>
    <property type="nucleotide sequence ID" value="XM_039087924.2"/>
</dbReference>
<dbReference type="RefSeq" id="XP_063126322.1">
    <molecule id="Q91ZF1-1"/>
    <property type="nucleotide sequence ID" value="XM_063270252.1"/>
</dbReference>
<dbReference type="SMR" id="Q91ZF1"/>
<dbReference type="FunCoup" id="Q91ZF1">
    <property type="interactions" value="11"/>
</dbReference>
<dbReference type="STRING" id="10116.ENSRNOP00000002259"/>
<dbReference type="GuidetoPHARMACOLOGY" id="439"/>
<dbReference type="TCDB" id="1.A.2.1.4">
    <property type="family name" value="the inward rectifier k(+) channel (irk-c) family"/>
</dbReference>
<dbReference type="PhosphoSitePlus" id="Q91ZF1"/>
<dbReference type="PaxDb" id="10116-ENSRNOP00000002259"/>
<dbReference type="Ensembl" id="ENSRNOT00000094937.1">
    <molecule id="Q91ZF1-2"/>
    <property type="protein sequence ID" value="ENSRNOP00000092361.1"/>
    <property type="gene ID" value="ENSRNOG00000062944.1"/>
</dbReference>
<dbReference type="Ensembl" id="ENSRNOT00000099760.1">
    <molecule id="Q91ZF1-2"/>
    <property type="protein sequence ID" value="ENSRNOP00000091174.1"/>
    <property type="gene ID" value="ENSRNOG00000062944.1"/>
</dbReference>
<dbReference type="Ensembl" id="ENSRNOT00000104151.1">
    <molecule id="Q91ZF1-2"/>
    <property type="protein sequence ID" value="ENSRNOP00000089124.1"/>
    <property type="gene ID" value="ENSRNOG00000062944.1"/>
</dbReference>
<dbReference type="Ensembl" id="ENSRNOT00000108557.1">
    <molecule id="Q91ZF1-2"/>
    <property type="protein sequence ID" value="ENSRNOP00000078466.1"/>
    <property type="gene ID" value="ENSRNOG00000062944.1"/>
</dbReference>
<dbReference type="Ensembl" id="ENSRNOT00000111269.1">
    <molecule id="Q91ZF1-2"/>
    <property type="protein sequence ID" value="ENSRNOP00000087933.1"/>
    <property type="gene ID" value="ENSRNOG00000062944.1"/>
</dbReference>
<dbReference type="Ensembl" id="ENSRNOT00000111664.1">
    <molecule id="Q91ZF1-2"/>
    <property type="protein sequence ID" value="ENSRNOP00000093558.1"/>
    <property type="gene ID" value="ENSRNOG00000062944.1"/>
</dbReference>
<dbReference type="Ensembl" id="ENSRNOT00000113883.1">
    <molecule id="Q91ZF1-2"/>
    <property type="protein sequence ID" value="ENSRNOP00000097650.1"/>
    <property type="gene ID" value="ENSRNOG00000062944.1"/>
</dbReference>
<dbReference type="Ensembl" id="ENSRNOT00000118577.1">
    <molecule id="Q91ZF1-2"/>
    <property type="protein sequence ID" value="ENSRNOP00000077685.1"/>
    <property type="gene ID" value="ENSRNOG00000062944.1"/>
</dbReference>
<dbReference type="GeneID" id="170847"/>
<dbReference type="KEGG" id="rno:170847"/>
<dbReference type="UCSC" id="RGD:621662">
    <molecule id="Q91ZF1-1"/>
    <property type="organism name" value="rat"/>
</dbReference>
<dbReference type="AGR" id="RGD:621662"/>
<dbReference type="CTD" id="3772"/>
<dbReference type="RGD" id="621662">
    <property type="gene designation" value="Kcnj15"/>
</dbReference>
<dbReference type="VEuPathDB" id="HostDB:ENSRNOG00000062944"/>
<dbReference type="eggNOG" id="KOG3827">
    <property type="taxonomic scope" value="Eukaryota"/>
</dbReference>
<dbReference type="GeneTree" id="ENSGT00990000203615"/>
<dbReference type="HOGENOM" id="CLU_022738_3_3_1"/>
<dbReference type="InParanoid" id="Q91ZF1"/>
<dbReference type="OMA" id="LPMHRST"/>
<dbReference type="PhylomeDB" id="Q91ZF1"/>
<dbReference type="TreeFam" id="TF313676"/>
<dbReference type="Reactome" id="R-RNO-1296041">
    <property type="pathway name" value="Activation of G protein gated Potassium channels"/>
</dbReference>
<dbReference type="Reactome" id="R-RNO-997272">
    <property type="pathway name" value="Inhibition of voltage gated Ca2+ channels via Gbeta/gamma subunits"/>
</dbReference>
<dbReference type="PRO" id="PR:Q91ZF1"/>
<dbReference type="Proteomes" id="UP000002494">
    <property type="component" value="Chromosome 11"/>
</dbReference>
<dbReference type="Bgee" id="ENSRNOG00000001656">
    <property type="expression patterns" value="Expressed in adult mammalian kidney and 12 other cell types or tissues"/>
</dbReference>
<dbReference type="GO" id="GO:0034702">
    <property type="term" value="C:monoatomic ion channel complex"/>
    <property type="evidence" value="ECO:0007669"/>
    <property type="project" value="UniProtKB-KW"/>
</dbReference>
<dbReference type="GO" id="GO:0005886">
    <property type="term" value="C:plasma membrane"/>
    <property type="evidence" value="ECO:0000318"/>
    <property type="project" value="GO_Central"/>
</dbReference>
<dbReference type="GO" id="GO:0005242">
    <property type="term" value="F:inward rectifier potassium channel activity"/>
    <property type="evidence" value="ECO:0000314"/>
    <property type="project" value="RGD"/>
</dbReference>
<dbReference type="GO" id="GO:0005267">
    <property type="term" value="F:potassium channel activity"/>
    <property type="evidence" value="ECO:0000266"/>
    <property type="project" value="RGD"/>
</dbReference>
<dbReference type="GO" id="GO:1990573">
    <property type="term" value="P:potassium ion import across plasma membrane"/>
    <property type="evidence" value="ECO:0000318"/>
    <property type="project" value="GO_Central"/>
</dbReference>
<dbReference type="GO" id="GO:0006813">
    <property type="term" value="P:potassium ion transport"/>
    <property type="evidence" value="ECO:0000266"/>
    <property type="project" value="RGD"/>
</dbReference>
<dbReference type="GO" id="GO:0034765">
    <property type="term" value="P:regulation of monoatomic ion transmembrane transport"/>
    <property type="evidence" value="ECO:0000318"/>
    <property type="project" value="GO_Central"/>
</dbReference>
<dbReference type="FunFam" id="1.10.287.70:FF:000036">
    <property type="entry name" value="ATP-sensitive inward rectifier potassium channel 1"/>
    <property type="match status" value="1"/>
</dbReference>
<dbReference type="FunFam" id="2.60.40.1400:FF:000002">
    <property type="entry name" value="ATP-sensitive inward rectifier potassium channel 1"/>
    <property type="match status" value="1"/>
</dbReference>
<dbReference type="Gene3D" id="1.10.287.70">
    <property type="match status" value="1"/>
</dbReference>
<dbReference type="Gene3D" id="2.60.40.1400">
    <property type="entry name" value="G protein-activated inward rectifier potassium channel 1"/>
    <property type="match status" value="1"/>
</dbReference>
<dbReference type="InterPro" id="IPR014756">
    <property type="entry name" value="Ig_E-set"/>
</dbReference>
<dbReference type="InterPro" id="IPR041647">
    <property type="entry name" value="IRK_C"/>
</dbReference>
<dbReference type="InterPro" id="IPR016449">
    <property type="entry name" value="K_chnl_inward-rec_Kir"/>
</dbReference>
<dbReference type="InterPro" id="IPR003270">
    <property type="entry name" value="K_chnl_inward-rec_Kir1.3"/>
</dbReference>
<dbReference type="InterPro" id="IPR013518">
    <property type="entry name" value="K_chnl_inward-rec_Kir_cyto"/>
</dbReference>
<dbReference type="InterPro" id="IPR040445">
    <property type="entry name" value="Kir_TM"/>
</dbReference>
<dbReference type="PANTHER" id="PTHR11767:SF20">
    <property type="entry name" value="ATP-SENSITIVE INWARD RECTIFIER POTASSIUM CHANNEL 15"/>
    <property type="match status" value="1"/>
</dbReference>
<dbReference type="PANTHER" id="PTHR11767">
    <property type="entry name" value="INWARD RECTIFIER POTASSIUM CHANNEL"/>
    <property type="match status" value="1"/>
</dbReference>
<dbReference type="Pfam" id="PF01007">
    <property type="entry name" value="IRK"/>
    <property type="match status" value="1"/>
</dbReference>
<dbReference type="Pfam" id="PF17655">
    <property type="entry name" value="IRK_C"/>
    <property type="match status" value="1"/>
</dbReference>
<dbReference type="PIRSF" id="PIRSF005465">
    <property type="entry name" value="GIRK_kir"/>
    <property type="match status" value="1"/>
</dbReference>
<dbReference type="PRINTS" id="PR01323">
    <property type="entry name" value="KIR13CHANNEL"/>
</dbReference>
<dbReference type="PRINTS" id="PR01320">
    <property type="entry name" value="KIRCHANNEL"/>
</dbReference>
<dbReference type="SUPFAM" id="SSF81296">
    <property type="entry name" value="E set domains"/>
    <property type="match status" value="1"/>
</dbReference>
<dbReference type="SUPFAM" id="SSF81324">
    <property type="entry name" value="Voltage-gated potassium channels"/>
    <property type="match status" value="1"/>
</dbReference>
<keyword id="KW-0025">Alternative splicing</keyword>
<keyword id="KW-1003">Cell membrane</keyword>
<keyword id="KW-0407">Ion channel</keyword>
<keyword id="KW-0406">Ion transport</keyword>
<keyword id="KW-0472">Membrane</keyword>
<keyword id="KW-0630">Potassium</keyword>
<keyword id="KW-0633">Potassium transport</keyword>
<keyword id="KW-1185">Reference proteome</keyword>
<keyword id="KW-0812">Transmembrane</keyword>
<keyword id="KW-1133">Transmembrane helix</keyword>
<keyword id="KW-0813">Transport</keyword>
<keyword id="KW-0851">Voltage-gated channel</keyword>
<feature type="chain" id="PRO_0000154974" description="ATP-sensitive inward rectifier potassium channel 15">
    <location>
        <begin position="1"/>
        <end position="405"/>
    </location>
</feature>
<feature type="topological domain" description="Cytoplasmic" evidence="3">
    <location>
        <begin position="1"/>
        <end position="90"/>
    </location>
</feature>
<feature type="transmembrane region" description="Helical; Name=M1" evidence="3">
    <location>
        <begin position="91"/>
        <end position="117"/>
    </location>
</feature>
<feature type="topological domain" description="Extracellular" evidence="3">
    <location>
        <begin position="118"/>
        <end position="143"/>
    </location>
</feature>
<feature type="intramembrane region" description="Helical; Pore-forming; Name=H5" evidence="3">
    <location>
        <begin position="144"/>
        <end position="160"/>
    </location>
</feature>
<feature type="topological domain" description="Extracellular" evidence="3">
    <location>
        <begin position="161"/>
        <end position="169"/>
    </location>
</feature>
<feature type="transmembrane region" description="Helical; Name=M2" evidence="3">
    <location>
        <begin position="170"/>
        <end position="195"/>
    </location>
</feature>
<feature type="topological domain" description="Cytoplasmic" evidence="3">
    <location>
        <begin position="196"/>
        <end position="405"/>
    </location>
</feature>
<feature type="short sequence motif" description="Selectivity filter" evidence="8">
    <location>
        <begin position="157"/>
        <end position="162"/>
    </location>
</feature>
<feature type="site" description="Role in the control of polyamine-mediated channel gating and in the blocking by intracellular magnesium" evidence="1">
    <location>
        <position position="187"/>
    </location>
</feature>
<feature type="splice variant" id="VSP_011687" description="In isoform 2." evidence="7">
    <location>
        <begin position="1"/>
        <end position="30"/>
    </location>
</feature>
<comment type="function">
    <text evidence="1 6">Inward rectifier potassium channels are characterized by a greater tendency to allow potassium to flow into the cell rather than out of it. Their voltage dependence is regulated by the concentration of extracellular potassium; as external potassium is raised, the voltage range of the channel opening shifts to more positive voltages (PubMed:11804844). The inward rectification is mainly due to the blockage of outward current by internal magnesium (By similarity).</text>
</comment>
<comment type="catalytic activity">
    <reaction evidence="6">
        <text>K(+)(in) = K(+)(out)</text>
        <dbReference type="Rhea" id="RHEA:29463"/>
        <dbReference type="ChEBI" id="CHEBI:29103"/>
    </reaction>
</comment>
<comment type="activity regulation">
    <text evidence="2">Channel activity is regulated by variations of cytosolic pH; reversibly inhibited by acidic pH values. Inhibited by Ba(2+) and Cs(+) in a voltage-dependent manner.</text>
</comment>
<comment type="subunit">
    <text evidence="1 2 4">Can form heteromultimeric channels with Kir5.1/KCNJ16 (By similarity). Interacts with PATJ (By similarity).</text>
</comment>
<comment type="subcellular location">
    <subcellularLocation>
        <location evidence="5">Membrane</location>
        <topology evidence="5">Multi-pass membrane protein</topology>
    </subcellularLocation>
    <subcellularLocation>
        <location evidence="6">Cell membrane</location>
    </subcellularLocation>
</comment>
<comment type="alternative products">
    <event type="alternative splicing"/>
    <isoform>
        <id>Q91ZF1-1</id>
        <name>1</name>
        <name>Kir4.2a</name>
        <sequence type="displayed"/>
    </isoform>
    <isoform>
        <id>Q91ZF1-2</id>
        <name>2</name>
        <sequence type="described" ref="VSP_011687"/>
    </isoform>
</comment>
<comment type="similarity">
    <text evidence="8">Belongs to the inward rectifier-type potassium channel (TC 1.A.2.1) family. KCNJ15 subfamily.</text>
</comment>
<sequence>MVARWVKGSEDAPLALQKIPDLQSGPRSLRMEAIHIGMSSAPLVKHSNGVGLKAHRPRVMSKSGHSNVRIDKVDGIYLLYLQDLWTTVIDMKWRYKLTLFAATFVMTWFLFGVVYYAIAFIHGDLELGESNSNHTPCIMKVDSLTGAFLFSLESQTTIGYGVRSITEECPHAIFLLVAQLVITTLIEIFITGTFLAKIARPKKRAETIKFSHCAVISKQNGKLCLVIQVANMRKSLLIQCQLSGKLLQTHVTKEGERILLNQATVKFHVDSSSESPFLILPMTFYHVLDETSPLRDLTPQNLKEKEFELVVLLNATVESTSAVCQSRTSYIPEEIYWGFEFVPVVSLSKNGKYVADFSQFEQIRKSPDCTFYCADSEKQKLEEQYRQEDQRERELRSLLLQQSNV</sequence>
<gene>
    <name type="primary">Kcnj15</name>
</gene>
<reference key="1">
    <citation type="journal article" date="2002" name="Am. J. Physiol.">
        <title>Cloning, expression, and localization of a rat hepatocyte inwardly rectifying potassium channel.</title>
        <authorList>
            <person name="Hill C.E."/>
            <person name="Briggs M.M."/>
            <person name="Liu J."/>
            <person name="Magtanong L."/>
        </authorList>
    </citation>
    <scope>NUCLEOTIDE SEQUENCE [MRNA] (ISOFORMS 1 AND 2)</scope>
    <scope>FUNCTION</scope>
    <scope>TRANSPORTER ACTIVITY</scope>
    <scope>SUBCELLULAR LOCATION</scope>
    <source>
        <strain>Sprague-Dawley</strain>
    </source>
</reference>
<organism>
    <name type="scientific">Rattus norvegicus</name>
    <name type="common">Rat</name>
    <dbReference type="NCBI Taxonomy" id="10116"/>
    <lineage>
        <taxon>Eukaryota</taxon>
        <taxon>Metazoa</taxon>
        <taxon>Chordata</taxon>
        <taxon>Craniata</taxon>
        <taxon>Vertebrata</taxon>
        <taxon>Euteleostomi</taxon>
        <taxon>Mammalia</taxon>
        <taxon>Eutheria</taxon>
        <taxon>Euarchontoglires</taxon>
        <taxon>Glires</taxon>
        <taxon>Rodentia</taxon>
        <taxon>Myomorpha</taxon>
        <taxon>Muroidea</taxon>
        <taxon>Muridae</taxon>
        <taxon>Murinae</taxon>
        <taxon>Rattus</taxon>
    </lineage>
</organism>
<name>KCJ15_RAT</name>